<comment type="function">
    <text evidence="1">NAD-dependent lysine deacetylase and desuccinylase that specifically removes acetyl and succinyl groups on target proteins. Modulates the activities of several proteins which are inactive in their acylated form.</text>
</comment>
<comment type="function">
    <text evidence="3">Involved in non-homologous end joining (NHEJ) repair of blunt, 5' overhang and 3' overhang DNA double strand breaks (DSB). Overexpression increases the efficiency of NHEJ of the above DSBs 2-fold with no effect on repair fidelity.</text>
</comment>
<comment type="catalytic activity">
    <reaction evidence="1">
        <text>N(6)-succinyl-L-lysyl-[protein] + NAD(+) + H2O = 2''-O-succinyl-ADP-D-ribose + nicotinamide + L-lysyl-[protein]</text>
        <dbReference type="Rhea" id="RHEA:47668"/>
        <dbReference type="Rhea" id="RHEA-COMP:9752"/>
        <dbReference type="Rhea" id="RHEA-COMP:11877"/>
        <dbReference type="ChEBI" id="CHEBI:15377"/>
        <dbReference type="ChEBI" id="CHEBI:17154"/>
        <dbReference type="ChEBI" id="CHEBI:29969"/>
        <dbReference type="ChEBI" id="CHEBI:57540"/>
        <dbReference type="ChEBI" id="CHEBI:87830"/>
        <dbReference type="ChEBI" id="CHEBI:87832"/>
    </reaction>
</comment>
<comment type="catalytic activity">
    <reaction evidence="1">
        <text>N(6)-acetyl-L-lysyl-[protein] + NAD(+) + H2O = 2''-O-acetyl-ADP-D-ribose + nicotinamide + L-lysyl-[protein]</text>
        <dbReference type="Rhea" id="RHEA:43636"/>
        <dbReference type="Rhea" id="RHEA-COMP:9752"/>
        <dbReference type="Rhea" id="RHEA-COMP:10731"/>
        <dbReference type="ChEBI" id="CHEBI:15377"/>
        <dbReference type="ChEBI" id="CHEBI:17154"/>
        <dbReference type="ChEBI" id="CHEBI:29969"/>
        <dbReference type="ChEBI" id="CHEBI:57540"/>
        <dbReference type="ChEBI" id="CHEBI:61930"/>
        <dbReference type="ChEBI" id="CHEBI:83767"/>
        <dbReference type="EC" id="2.3.1.286"/>
    </reaction>
</comment>
<comment type="cofactor">
    <cofactor evidence="1">
        <name>Zn(2+)</name>
        <dbReference type="ChEBI" id="CHEBI:29105"/>
    </cofactor>
    <text evidence="1">Binds 1 zinc ion per subunit.</text>
</comment>
<comment type="subunit">
    <text evidence="3">Interacts with both Ku and LigD; may form a trimeric complex during NHEJ.</text>
</comment>
<comment type="subcellular location">
    <subcellularLocation>
        <location evidence="1">Cytoplasm</location>
    </subcellularLocation>
</comment>
<comment type="domain">
    <text evidence="1">2 residues (Tyr-53 and Arg-56) present in a large hydrophobic pocket are probably involved in substrate specificity. They are important for desuccinylation activity, but dispensable for deacetylation activity.</text>
</comment>
<comment type="disruption phenotype">
    <text evidence="3">Not essential for growth in the absence of DNA damage. Increased sensitivity to ionizing radiation in log, stationary and late stationary phase. Decreased efficiency of NHEJ on blunt, 5' overhang and 3' overhanging DSB, fidelity the same as for wild-type NHEJ.</text>
</comment>
<comment type="similarity">
    <text evidence="1">Belongs to the sirtuin family. Class III subfamily.</text>
</comment>
<keyword id="KW-0963">Cytoplasm</keyword>
<keyword id="KW-0903">Direct protein sequencing</keyword>
<keyword id="KW-0227">DNA damage</keyword>
<keyword id="KW-0234">DNA repair</keyword>
<keyword id="KW-0479">Metal-binding</keyword>
<keyword id="KW-0520">NAD</keyword>
<keyword id="KW-1185">Reference proteome</keyword>
<keyword id="KW-0808">Transferase</keyword>
<keyword id="KW-0862">Zinc</keyword>
<protein>
    <recommendedName>
        <fullName evidence="1">NAD-dependent protein deacylase Sir2</fullName>
        <ecNumber evidence="1 2">2.3.1.286</ecNumber>
    </recommendedName>
    <alternativeName>
        <fullName evidence="1">Regulatory protein SIR2 homolog</fullName>
    </alternativeName>
</protein>
<name>NDP_MYCS2</name>
<organism>
    <name type="scientific">Mycolicibacterium smegmatis (strain ATCC 700084 / mc(2)155)</name>
    <name type="common">Mycobacterium smegmatis</name>
    <dbReference type="NCBI Taxonomy" id="246196"/>
    <lineage>
        <taxon>Bacteria</taxon>
        <taxon>Bacillati</taxon>
        <taxon>Actinomycetota</taxon>
        <taxon>Actinomycetes</taxon>
        <taxon>Mycobacteriales</taxon>
        <taxon>Mycobacteriaceae</taxon>
        <taxon>Mycolicibacterium</taxon>
    </lineage>
</organism>
<dbReference type="EC" id="2.3.1.286" evidence="1 2"/>
<dbReference type="EMBL" id="CP000480">
    <property type="protein sequence ID" value="ABK72526.1"/>
    <property type="molecule type" value="Genomic_DNA"/>
</dbReference>
<dbReference type="EMBL" id="CP001663">
    <property type="protein sequence ID" value="AFP41485.1"/>
    <property type="molecule type" value="Genomic_DNA"/>
</dbReference>
<dbReference type="RefSeq" id="WP_011730361.1">
    <property type="nucleotide sequence ID" value="NZ_SIJM01000038.1"/>
</dbReference>
<dbReference type="RefSeq" id="YP_889421.1">
    <property type="nucleotide sequence ID" value="NC_008596.1"/>
</dbReference>
<dbReference type="SMR" id="A0R2N3"/>
<dbReference type="STRING" id="246196.MSMEG_5175"/>
<dbReference type="PaxDb" id="246196-MSMEI_5041"/>
<dbReference type="GeneID" id="93459838"/>
<dbReference type="KEGG" id="msb:LJ00_25595"/>
<dbReference type="KEGG" id="msg:MSMEI_5041"/>
<dbReference type="KEGG" id="msm:MSMEG_5175"/>
<dbReference type="PATRIC" id="fig|246196.19.peg.5049"/>
<dbReference type="eggNOG" id="COG0846">
    <property type="taxonomic scope" value="Bacteria"/>
</dbReference>
<dbReference type="OrthoDB" id="9800582at2"/>
<dbReference type="Proteomes" id="UP000000757">
    <property type="component" value="Chromosome"/>
</dbReference>
<dbReference type="Proteomes" id="UP000006158">
    <property type="component" value="Chromosome"/>
</dbReference>
<dbReference type="GO" id="GO:0005737">
    <property type="term" value="C:cytoplasm"/>
    <property type="evidence" value="ECO:0007669"/>
    <property type="project" value="UniProtKB-SubCell"/>
</dbReference>
<dbReference type="GO" id="GO:0017136">
    <property type="term" value="F:histone deacetylase activity, NAD-dependent"/>
    <property type="evidence" value="ECO:0007669"/>
    <property type="project" value="TreeGrafter"/>
</dbReference>
<dbReference type="GO" id="GO:0070403">
    <property type="term" value="F:NAD+ binding"/>
    <property type="evidence" value="ECO:0007669"/>
    <property type="project" value="UniProtKB-UniRule"/>
</dbReference>
<dbReference type="GO" id="GO:0036054">
    <property type="term" value="F:protein-malonyllysine demalonylase activity"/>
    <property type="evidence" value="ECO:0007669"/>
    <property type="project" value="InterPro"/>
</dbReference>
<dbReference type="GO" id="GO:0036055">
    <property type="term" value="F:protein-succinyllysine desuccinylase activity"/>
    <property type="evidence" value="ECO:0007669"/>
    <property type="project" value="UniProtKB-UniRule"/>
</dbReference>
<dbReference type="GO" id="GO:0008270">
    <property type="term" value="F:zinc ion binding"/>
    <property type="evidence" value="ECO:0007669"/>
    <property type="project" value="UniProtKB-UniRule"/>
</dbReference>
<dbReference type="GO" id="GO:0071479">
    <property type="term" value="P:cellular response to ionizing radiation"/>
    <property type="evidence" value="ECO:0000315"/>
    <property type="project" value="UniProtKB"/>
</dbReference>
<dbReference type="GO" id="GO:0006303">
    <property type="term" value="P:double-strand break repair via nonhomologous end joining"/>
    <property type="evidence" value="ECO:0000315"/>
    <property type="project" value="UniProtKB"/>
</dbReference>
<dbReference type="CDD" id="cd01412">
    <property type="entry name" value="SIRT5_Af1_CobB"/>
    <property type="match status" value="1"/>
</dbReference>
<dbReference type="Gene3D" id="3.30.1600.10">
    <property type="entry name" value="SIR2/SIRT2 'Small Domain"/>
    <property type="match status" value="1"/>
</dbReference>
<dbReference type="Gene3D" id="3.40.50.1220">
    <property type="entry name" value="TPP-binding domain"/>
    <property type="match status" value="1"/>
</dbReference>
<dbReference type="HAMAP" id="MF_01121">
    <property type="entry name" value="Sirtuin_ClassIII"/>
    <property type="match status" value="1"/>
</dbReference>
<dbReference type="InterPro" id="IPR029035">
    <property type="entry name" value="DHS-like_NAD/FAD-binding_dom"/>
</dbReference>
<dbReference type="InterPro" id="IPR050134">
    <property type="entry name" value="NAD-dep_sirtuin_deacylases"/>
</dbReference>
<dbReference type="InterPro" id="IPR003000">
    <property type="entry name" value="Sirtuin"/>
</dbReference>
<dbReference type="InterPro" id="IPR026591">
    <property type="entry name" value="Sirtuin_cat_small_dom_sf"/>
</dbReference>
<dbReference type="InterPro" id="IPR027546">
    <property type="entry name" value="Sirtuin_class_III"/>
</dbReference>
<dbReference type="InterPro" id="IPR026590">
    <property type="entry name" value="Ssirtuin_cat_dom"/>
</dbReference>
<dbReference type="NCBIfam" id="NF001753">
    <property type="entry name" value="PRK00481.1-3"/>
    <property type="match status" value="1"/>
</dbReference>
<dbReference type="PANTHER" id="PTHR11085:SF4">
    <property type="entry name" value="NAD-DEPENDENT PROTEIN DEACYLASE"/>
    <property type="match status" value="1"/>
</dbReference>
<dbReference type="PANTHER" id="PTHR11085">
    <property type="entry name" value="NAD-DEPENDENT PROTEIN DEACYLASE SIRTUIN-5, MITOCHONDRIAL-RELATED"/>
    <property type="match status" value="1"/>
</dbReference>
<dbReference type="Pfam" id="PF02146">
    <property type="entry name" value="SIR2"/>
    <property type="match status" value="1"/>
</dbReference>
<dbReference type="SUPFAM" id="SSF52467">
    <property type="entry name" value="DHS-like NAD/FAD-binding domain"/>
    <property type="match status" value="1"/>
</dbReference>
<dbReference type="PROSITE" id="PS50305">
    <property type="entry name" value="SIRTUIN"/>
    <property type="match status" value="1"/>
</dbReference>
<proteinExistence type="evidence at protein level"/>
<reference key="1">
    <citation type="submission" date="2006-10" db="EMBL/GenBank/DDBJ databases">
        <authorList>
            <person name="Fleischmann R.D."/>
            <person name="Dodson R.J."/>
            <person name="Haft D.H."/>
            <person name="Merkel J.S."/>
            <person name="Nelson W.C."/>
            <person name="Fraser C.M."/>
        </authorList>
    </citation>
    <scope>NUCLEOTIDE SEQUENCE [LARGE SCALE GENOMIC DNA]</scope>
    <source>
        <strain>ATCC 700084 / mc(2)155</strain>
    </source>
</reference>
<reference key="2">
    <citation type="journal article" date="2007" name="Genome Biol.">
        <title>Interrupted coding sequences in Mycobacterium smegmatis: authentic mutations or sequencing errors?</title>
        <authorList>
            <person name="Deshayes C."/>
            <person name="Perrodou E."/>
            <person name="Gallien S."/>
            <person name="Euphrasie D."/>
            <person name="Schaeffer C."/>
            <person name="Van-Dorsselaer A."/>
            <person name="Poch O."/>
            <person name="Lecompte O."/>
            <person name="Reyrat J.-M."/>
        </authorList>
    </citation>
    <scope>NUCLEOTIDE SEQUENCE [LARGE SCALE GENOMIC DNA]</scope>
    <source>
        <strain>ATCC 700084 / mc(2)155</strain>
    </source>
</reference>
<reference key="3">
    <citation type="journal article" date="2009" name="Genome Res.">
        <title>Ortho-proteogenomics: multiple proteomes investigation through orthology and a new MS-based protocol.</title>
        <authorList>
            <person name="Gallien S."/>
            <person name="Perrodou E."/>
            <person name="Carapito C."/>
            <person name="Deshayes C."/>
            <person name="Reyrat J.-M."/>
            <person name="Van Dorsselaer A."/>
            <person name="Poch O."/>
            <person name="Schaeffer C."/>
            <person name="Lecompte O."/>
        </authorList>
    </citation>
    <scope>NUCLEOTIDE SEQUENCE [LARGE SCALE GENOMIC DNA]</scope>
    <source>
        <strain>ATCC 700084 / mc(2)155</strain>
    </source>
</reference>
<reference key="4">
    <citation type="journal article" date="2011" name="PLoS ONE">
        <title>A Sir2-like protein participates in mycobacterial NHEJ.</title>
        <authorList>
            <person name="Li Z."/>
            <person name="Wen J."/>
            <person name="Lin Y."/>
            <person name="Wang S."/>
            <person name="Xue P."/>
            <person name="Zhang Z."/>
            <person name="Zhou Y."/>
            <person name="Wang X."/>
            <person name="Sui L."/>
            <person name="Bi L.J."/>
            <person name="Zhang X.E."/>
        </authorList>
    </citation>
    <scope>PROTEIN SEQUENCE OF 71-94 AND 219-231</scope>
    <scope>FUNCTION IN NHEJ</scope>
    <scope>INTERACTION WITH KU</scope>
    <scope>SUBUNIT</scope>
    <scope>DISRUPTION PHENOTYPE</scope>
    <source>
        <strain>ATCC 700084 / mc(2)155</strain>
    </source>
</reference>
<gene>
    <name type="primary">sir2</name>
    <name type="synonym">cobB</name>
    <name type="synonym">npdA</name>
    <name type="ordered locus">MSMEG_5175</name>
    <name type="ordered locus">MSMEI_5041</name>
</gene>
<accession>A0R2N3</accession>
<evidence type="ECO:0000255" key="1">
    <source>
        <dbReference type="HAMAP-Rule" id="MF_01121"/>
    </source>
</evidence>
<evidence type="ECO:0000255" key="2">
    <source>
        <dbReference type="PROSITE-ProRule" id="PRU00236"/>
    </source>
</evidence>
<evidence type="ECO:0000269" key="3">
    <source>
    </source>
</evidence>
<feature type="chain" id="PRO_0000425954" description="NAD-dependent protein deacylase Sir2">
    <location>
        <begin position="1"/>
        <end position="240"/>
    </location>
</feature>
<feature type="domain" description="Deacetylase sirtuin-type" evidence="2">
    <location>
        <begin position="1"/>
        <end position="235"/>
    </location>
</feature>
<feature type="active site" description="Proton acceptor" evidence="2">
    <location>
        <position position="104"/>
    </location>
</feature>
<feature type="binding site" evidence="1">
    <location>
        <begin position="8"/>
        <end position="28"/>
    </location>
    <ligand>
        <name>NAD(+)</name>
        <dbReference type="ChEBI" id="CHEBI:57540"/>
    </ligand>
</feature>
<feature type="binding site" evidence="1">
    <location>
        <position position="53"/>
    </location>
    <ligand>
        <name>substrate</name>
    </ligand>
</feature>
<feature type="binding site" evidence="1">
    <location>
        <position position="56"/>
    </location>
    <ligand>
        <name>substrate</name>
    </ligand>
</feature>
<feature type="binding site" evidence="1">
    <location>
        <begin position="86"/>
        <end position="89"/>
    </location>
    <ligand>
        <name>NAD(+)</name>
        <dbReference type="ChEBI" id="CHEBI:57540"/>
    </ligand>
</feature>
<feature type="binding site" evidence="1">
    <location>
        <position position="112"/>
    </location>
    <ligand>
        <name>Zn(2+)</name>
        <dbReference type="ChEBI" id="CHEBI:29105"/>
    </ligand>
</feature>
<feature type="binding site" evidence="1">
    <location>
        <position position="115"/>
    </location>
    <ligand>
        <name>Zn(2+)</name>
        <dbReference type="ChEBI" id="CHEBI:29105"/>
    </ligand>
</feature>
<feature type="binding site" evidence="1">
    <location>
        <position position="138"/>
    </location>
    <ligand>
        <name>Zn(2+)</name>
        <dbReference type="ChEBI" id="CHEBI:29105"/>
    </ligand>
</feature>
<feature type="binding site" evidence="1">
    <location>
        <position position="140"/>
    </location>
    <ligand>
        <name>Zn(2+)</name>
        <dbReference type="ChEBI" id="CHEBI:29105"/>
    </ligand>
</feature>
<feature type="binding site" evidence="1">
    <location>
        <begin position="177"/>
        <end position="179"/>
    </location>
    <ligand>
        <name>NAD(+)</name>
        <dbReference type="ChEBI" id="CHEBI:57540"/>
    </ligand>
</feature>
<feature type="binding site" evidence="1">
    <location>
        <begin position="203"/>
        <end position="205"/>
    </location>
    <ligand>
        <name>NAD(+)</name>
        <dbReference type="ChEBI" id="CHEBI:57540"/>
    </ligand>
</feature>
<feature type="binding site" evidence="1">
    <location>
        <position position="221"/>
    </location>
    <ligand>
        <name>NAD(+)</name>
        <dbReference type="ChEBI" id="CHEBI:57540"/>
    </ligand>
</feature>
<sequence>MQVTVLSGAGISAESGVPTFRDAETGLWAQVDPYEISSTDGWQRNPEKVWAWYLWRHYMMARVAPNEAHRTVAAWEDHLDVRVVTQNIDDLHERAGSTNVYHLHGSLFEFRCDACGSAFEGNLPEMPEPVETIDPPVCPCSGLIRPSVVWFGEPLPDAAWNRSVLAVSSADVVIVVGTSSIVYPAAGLPEAALAAGKPVIEVNPERTPLSDSATVSLRETASEALPTLLQRLPELLNRSA</sequence>